<proteinExistence type="inferred from homology"/>
<feature type="chain" id="PRO_0000159064" description="Putative sulfur carrier protein YedF">
    <location>
        <begin position="1"/>
        <end position="77"/>
    </location>
</feature>
<feature type="active site" description="Cysteine persulfide intermediate" evidence="1">
    <location>
        <position position="17"/>
    </location>
</feature>
<name>YEDF_ECO57</name>
<keyword id="KW-1185">Reference proteome</keyword>
<accession>P0AA33</accession>
<accession>P31065</accession>
<evidence type="ECO:0000250" key="1">
    <source>
        <dbReference type="UniProtKB" id="P0A890"/>
    </source>
</evidence>
<evidence type="ECO:0000305" key="2"/>
<dbReference type="EMBL" id="AE005174">
    <property type="protein sequence ID" value="AAG56945.1"/>
    <property type="molecule type" value="Genomic_DNA"/>
</dbReference>
<dbReference type="EMBL" id="BA000007">
    <property type="protein sequence ID" value="BAB36092.1"/>
    <property type="molecule type" value="Genomic_DNA"/>
</dbReference>
<dbReference type="PIR" id="E85810">
    <property type="entry name" value="E85810"/>
</dbReference>
<dbReference type="PIR" id="E90962">
    <property type="entry name" value="E90962"/>
</dbReference>
<dbReference type="RefSeq" id="NP_310696.1">
    <property type="nucleotide sequence ID" value="NC_002695.1"/>
</dbReference>
<dbReference type="RefSeq" id="WP_000790504.1">
    <property type="nucleotide sequence ID" value="NZ_VOAI01000028.1"/>
</dbReference>
<dbReference type="BMRB" id="P0AA33"/>
<dbReference type="SMR" id="P0AA33"/>
<dbReference type="STRING" id="155864.Z3020"/>
<dbReference type="GeneID" id="913714"/>
<dbReference type="GeneID" id="93775259"/>
<dbReference type="KEGG" id="ece:Z3020"/>
<dbReference type="KEGG" id="ecs:ECs_2669"/>
<dbReference type="PATRIC" id="fig|386585.9.peg.2797"/>
<dbReference type="eggNOG" id="COG0425">
    <property type="taxonomic scope" value="Bacteria"/>
</dbReference>
<dbReference type="HOGENOM" id="CLU_165255_0_0_6"/>
<dbReference type="OMA" id="PSEWRIL"/>
<dbReference type="Proteomes" id="UP000000558">
    <property type="component" value="Chromosome"/>
</dbReference>
<dbReference type="Proteomes" id="UP000002519">
    <property type="component" value="Chromosome"/>
</dbReference>
<dbReference type="CDD" id="cd03422">
    <property type="entry name" value="YedF"/>
    <property type="match status" value="1"/>
</dbReference>
<dbReference type="FunFam" id="3.30.110.40:FF:000001">
    <property type="entry name" value="SirA-like family protein"/>
    <property type="match status" value="1"/>
</dbReference>
<dbReference type="Gene3D" id="3.30.110.40">
    <property type="entry name" value="TusA-like domain"/>
    <property type="match status" value="1"/>
</dbReference>
<dbReference type="InterPro" id="IPR001455">
    <property type="entry name" value="TusA-like"/>
</dbReference>
<dbReference type="InterPro" id="IPR036868">
    <property type="entry name" value="TusA-like_sf"/>
</dbReference>
<dbReference type="InterPro" id="IPR049570">
    <property type="entry name" value="YedF"/>
</dbReference>
<dbReference type="NCBIfam" id="NF008242">
    <property type="entry name" value="PRK11018.1"/>
    <property type="match status" value="1"/>
</dbReference>
<dbReference type="PANTHER" id="PTHR33279">
    <property type="entry name" value="SULFUR CARRIER PROTEIN YEDF-RELATED"/>
    <property type="match status" value="1"/>
</dbReference>
<dbReference type="PANTHER" id="PTHR33279:SF6">
    <property type="entry name" value="SULFUR CARRIER PROTEIN YEDF-RELATED"/>
    <property type="match status" value="1"/>
</dbReference>
<dbReference type="Pfam" id="PF01206">
    <property type="entry name" value="TusA"/>
    <property type="match status" value="1"/>
</dbReference>
<dbReference type="SUPFAM" id="SSF64307">
    <property type="entry name" value="SirA-like"/>
    <property type="match status" value="1"/>
</dbReference>
<dbReference type="PROSITE" id="PS01148">
    <property type="entry name" value="UPF0033"/>
    <property type="match status" value="1"/>
</dbReference>
<organism>
    <name type="scientific">Escherichia coli O157:H7</name>
    <dbReference type="NCBI Taxonomy" id="83334"/>
    <lineage>
        <taxon>Bacteria</taxon>
        <taxon>Pseudomonadati</taxon>
        <taxon>Pseudomonadota</taxon>
        <taxon>Gammaproteobacteria</taxon>
        <taxon>Enterobacterales</taxon>
        <taxon>Enterobacteriaceae</taxon>
        <taxon>Escherichia</taxon>
    </lineage>
</organism>
<reference key="1">
    <citation type="journal article" date="2001" name="Nature">
        <title>Genome sequence of enterohaemorrhagic Escherichia coli O157:H7.</title>
        <authorList>
            <person name="Perna N.T."/>
            <person name="Plunkett G. III"/>
            <person name="Burland V."/>
            <person name="Mau B."/>
            <person name="Glasner J.D."/>
            <person name="Rose D.J."/>
            <person name="Mayhew G.F."/>
            <person name="Evans P.S."/>
            <person name="Gregor J."/>
            <person name="Kirkpatrick H.A."/>
            <person name="Posfai G."/>
            <person name="Hackett J."/>
            <person name="Klink S."/>
            <person name="Boutin A."/>
            <person name="Shao Y."/>
            <person name="Miller L."/>
            <person name="Grotbeck E.J."/>
            <person name="Davis N.W."/>
            <person name="Lim A."/>
            <person name="Dimalanta E.T."/>
            <person name="Potamousis K."/>
            <person name="Apodaca J."/>
            <person name="Anantharaman T.S."/>
            <person name="Lin J."/>
            <person name="Yen G."/>
            <person name="Schwartz D.C."/>
            <person name="Welch R.A."/>
            <person name="Blattner F.R."/>
        </authorList>
    </citation>
    <scope>NUCLEOTIDE SEQUENCE [LARGE SCALE GENOMIC DNA]</scope>
    <source>
        <strain>O157:H7 / EDL933 / ATCC 700927 / EHEC</strain>
    </source>
</reference>
<reference key="2">
    <citation type="journal article" date="2001" name="DNA Res.">
        <title>Complete genome sequence of enterohemorrhagic Escherichia coli O157:H7 and genomic comparison with a laboratory strain K-12.</title>
        <authorList>
            <person name="Hayashi T."/>
            <person name="Makino K."/>
            <person name="Ohnishi M."/>
            <person name="Kurokawa K."/>
            <person name="Ishii K."/>
            <person name="Yokoyama K."/>
            <person name="Han C.-G."/>
            <person name="Ohtsubo E."/>
            <person name="Nakayama K."/>
            <person name="Murata T."/>
            <person name="Tanaka M."/>
            <person name="Tobe T."/>
            <person name="Iida T."/>
            <person name="Takami H."/>
            <person name="Honda T."/>
            <person name="Sasakawa C."/>
            <person name="Ogasawara N."/>
            <person name="Yasunaga T."/>
            <person name="Kuhara S."/>
            <person name="Shiba T."/>
            <person name="Hattori M."/>
            <person name="Shinagawa H."/>
        </authorList>
    </citation>
    <scope>NUCLEOTIDE SEQUENCE [LARGE SCALE GENOMIC DNA]</scope>
    <source>
        <strain>O157:H7 / Sakai / RIMD 0509952 / EHEC</strain>
    </source>
</reference>
<protein>
    <recommendedName>
        <fullName>Putative sulfur carrier protein YedF</fullName>
    </recommendedName>
</protein>
<gene>
    <name type="primary">yedF</name>
    <name type="ordered locus">Z3020</name>
    <name type="ordered locus">ECs2669</name>
</gene>
<comment type="similarity">
    <text evidence="2">Belongs to the sulfur carrier protein TusA family.</text>
</comment>
<sequence length="77" mass="8639">MKNIVPDYRLDMVGEPCPYPAVATLEAMPQLKKGEILEVVSDCPQSINNIPLDARNHGYTVLDIQQDGPTIRYLIQK</sequence>